<reference key="1">
    <citation type="journal article" date="2003" name="Nature">
        <title>The genome sequence of the filamentous fungus Neurospora crassa.</title>
        <authorList>
            <person name="Galagan J.E."/>
            <person name="Calvo S.E."/>
            <person name="Borkovich K.A."/>
            <person name="Selker E.U."/>
            <person name="Read N.D."/>
            <person name="Jaffe D.B."/>
            <person name="FitzHugh W."/>
            <person name="Ma L.-J."/>
            <person name="Smirnov S."/>
            <person name="Purcell S."/>
            <person name="Rehman B."/>
            <person name="Elkins T."/>
            <person name="Engels R."/>
            <person name="Wang S."/>
            <person name="Nielsen C.B."/>
            <person name="Butler J."/>
            <person name="Endrizzi M."/>
            <person name="Qui D."/>
            <person name="Ianakiev P."/>
            <person name="Bell-Pedersen D."/>
            <person name="Nelson M.A."/>
            <person name="Werner-Washburne M."/>
            <person name="Selitrennikoff C.P."/>
            <person name="Kinsey J.A."/>
            <person name="Braun E.L."/>
            <person name="Zelter A."/>
            <person name="Schulte U."/>
            <person name="Kothe G.O."/>
            <person name="Jedd G."/>
            <person name="Mewes H.-W."/>
            <person name="Staben C."/>
            <person name="Marcotte E."/>
            <person name="Greenberg D."/>
            <person name="Roy A."/>
            <person name="Foley K."/>
            <person name="Naylor J."/>
            <person name="Stange-Thomann N."/>
            <person name="Barrett R."/>
            <person name="Gnerre S."/>
            <person name="Kamal M."/>
            <person name="Kamvysselis M."/>
            <person name="Mauceli E.W."/>
            <person name="Bielke C."/>
            <person name="Rudd S."/>
            <person name="Frishman D."/>
            <person name="Krystofova S."/>
            <person name="Rasmussen C."/>
            <person name="Metzenberg R.L."/>
            <person name="Perkins D.D."/>
            <person name="Kroken S."/>
            <person name="Cogoni C."/>
            <person name="Macino G."/>
            <person name="Catcheside D.E.A."/>
            <person name="Li W."/>
            <person name="Pratt R.J."/>
            <person name="Osmani S.A."/>
            <person name="DeSouza C.P.C."/>
            <person name="Glass N.L."/>
            <person name="Orbach M.J."/>
            <person name="Berglund J.A."/>
            <person name="Voelker R."/>
            <person name="Yarden O."/>
            <person name="Plamann M."/>
            <person name="Seiler S."/>
            <person name="Dunlap J.C."/>
            <person name="Radford A."/>
            <person name="Aramayo R."/>
            <person name="Natvig D.O."/>
            <person name="Alex L.A."/>
            <person name="Mannhaupt G."/>
            <person name="Ebbole D.J."/>
            <person name="Freitag M."/>
            <person name="Paulsen I."/>
            <person name="Sachs M.S."/>
            <person name="Lander E.S."/>
            <person name="Nusbaum C."/>
            <person name="Birren B.W."/>
        </authorList>
    </citation>
    <scope>NUCLEOTIDE SEQUENCE [LARGE SCALE GENOMIC DNA]</scope>
    <source>
        <strain>ATCC 24698 / 74-OR23-1A / CBS 708.71 / DSM 1257 / FGSC 987</strain>
    </source>
</reference>
<accession>Q7SBD4</accession>
<name>EIF3C_NEUCR</name>
<organism>
    <name type="scientific">Neurospora crassa (strain ATCC 24698 / 74-OR23-1A / CBS 708.71 / DSM 1257 / FGSC 987)</name>
    <dbReference type="NCBI Taxonomy" id="367110"/>
    <lineage>
        <taxon>Eukaryota</taxon>
        <taxon>Fungi</taxon>
        <taxon>Dikarya</taxon>
        <taxon>Ascomycota</taxon>
        <taxon>Pezizomycotina</taxon>
        <taxon>Sordariomycetes</taxon>
        <taxon>Sordariomycetidae</taxon>
        <taxon>Sordariales</taxon>
        <taxon>Sordariaceae</taxon>
        <taxon>Neurospora</taxon>
    </lineage>
</organism>
<proteinExistence type="inferred from homology"/>
<gene>
    <name type="primary">nip-1</name>
    <name type="ORF">NCU07831</name>
</gene>
<keyword id="KW-0963">Cytoplasm</keyword>
<keyword id="KW-0396">Initiation factor</keyword>
<keyword id="KW-0648">Protein biosynthesis</keyword>
<keyword id="KW-1185">Reference proteome</keyword>
<protein>
    <recommendedName>
        <fullName evidence="1">Eukaryotic translation initiation factor 3 subunit C</fullName>
        <shortName evidence="1">eIF3c</shortName>
    </recommendedName>
    <alternativeName>
        <fullName evidence="1">Eukaryotic translation initiation factor 3 93 kDa subunit homolog</fullName>
        <shortName evidence="1">eIF3 p93</shortName>
    </alternativeName>
    <alternativeName>
        <fullName evidence="1">Translation initiation factor eIF3, p93 subunit homolog</fullName>
    </alternativeName>
</protein>
<sequence>MSRFFRGGDDSSTDSSSEEEEVYTSEEEEEKVQAEDESSSEEESDEEESDEESSSDEEEGTKKKGASRFLQSDDESEEEEEEQSDDEATTKVKSAKDKRFDELESTISQIQNGQKINDWSLIANEFDKLNRQVVKLQDGSKAPKSYIKAIADLEDFMNETLAKQKVTPKKMNATNARGLNAVKQRIRKNNKEYQTQIDAYRKDADAFMESDDEVAAPKVVSKVRFEAPVVSAEQQEEDDKGFSTVDSRGKVVQYTPESILKHLRAIIESRGKKNTDRLEQIKVMETLNKVVPITPYQKIRVLQTLISARFDLGAGGAAQMPLDQWKAAERDLASLLEILEKEKDHVVVEGAEEWDDDDKLPTIPEGEKYLKVPGSVVSLIERLDDELTRSLQAIDPHTSEYIDRLTDEGSLYNTIFRGLLYYEHLRKDASLEVPQESLNRIIQRRLDHVYYKPAQVVKILEENAWKQVSAEADSEITPRSQSGDAGKLINILSNYLFENSEGIIRARAMLCQIYFLALHDEYYKSRDLMLTSHLQETIANFDIATQILYNRTLVQVGLCAFRKGLVYDAQNTLQEICGSGRQKELLAQGVMIQRYSQVTPEQERLEKQRQLPFHMHINLELLECVYLTCSMLLEIPLLAQTGSSPDVKKRIISKTYRRMLEYHERQIFTGPPENTRDHVMQASKALAAGEWKKATDFIHSIKIWDLMPNTEGIKTMLAKQIQEEGLRTYLFTYAPFYDTLAIATLSSMFELDSRKVSAVVSKMISHEELAAALDQVTETVIFRKGVELSRLQSLALTLSDKASSLIETNERTLEQKTQGSANAFSRKDNRGGGQRGGGQRGGRGGARTGGNPQRQAGGTQFTGGALGNAVRG</sequence>
<comment type="function">
    <text evidence="1">Component of the eukaryotic translation initiation factor 3 (eIF-3) complex, which is involved in protein synthesis of a specialized repertoire of mRNAs and, together with other initiation factors, stimulates binding of mRNA and methionyl-tRNAi to the 40S ribosome. The eIF-3 complex specifically targets and initiates translation of a subset of mRNAs involved in cell proliferation.</text>
</comment>
<comment type="subunit">
    <text evidence="1">Component of the eukaryotic translation initiation factor 3 (eIF-3) complex.</text>
</comment>
<comment type="subcellular location">
    <subcellularLocation>
        <location evidence="1">Cytoplasm</location>
    </subcellularLocation>
</comment>
<comment type="similarity">
    <text evidence="1">Belongs to the eIF-3 subunit C family.</text>
</comment>
<evidence type="ECO:0000255" key="1">
    <source>
        <dbReference type="HAMAP-Rule" id="MF_03002"/>
    </source>
</evidence>
<evidence type="ECO:0000255" key="2">
    <source>
        <dbReference type="PROSITE-ProRule" id="PRU01185"/>
    </source>
</evidence>
<evidence type="ECO:0000256" key="3">
    <source>
        <dbReference type="SAM" id="MobiDB-lite"/>
    </source>
</evidence>
<feature type="chain" id="PRO_0000364287" description="Eukaryotic translation initiation factor 3 subunit C">
    <location>
        <begin position="1"/>
        <end position="872"/>
    </location>
</feature>
<feature type="domain" description="PCI" evidence="2">
    <location>
        <begin position="613"/>
        <end position="787"/>
    </location>
</feature>
<feature type="region of interest" description="Disordered" evidence="3">
    <location>
        <begin position="1"/>
        <end position="100"/>
    </location>
</feature>
<feature type="region of interest" description="Disordered" evidence="3">
    <location>
        <begin position="812"/>
        <end position="872"/>
    </location>
</feature>
<feature type="compositionally biased region" description="Acidic residues" evidence="3">
    <location>
        <begin position="16"/>
        <end position="59"/>
    </location>
</feature>
<feature type="compositionally biased region" description="Acidic residues" evidence="3">
    <location>
        <begin position="72"/>
        <end position="87"/>
    </location>
</feature>
<feature type="compositionally biased region" description="Basic and acidic residues" evidence="3">
    <location>
        <begin position="88"/>
        <end position="100"/>
    </location>
</feature>
<feature type="compositionally biased region" description="Gly residues" evidence="3">
    <location>
        <begin position="831"/>
        <end position="848"/>
    </location>
</feature>
<dbReference type="EMBL" id="CM002238">
    <property type="protein sequence ID" value="EAA33716.1"/>
    <property type="molecule type" value="Genomic_DNA"/>
</dbReference>
<dbReference type="RefSeq" id="XP_962952.1">
    <property type="nucleotide sequence ID" value="XM_957859.3"/>
</dbReference>
<dbReference type="SMR" id="Q7SBD4"/>
<dbReference type="FunCoup" id="Q7SBD4">
    <property type="interactions" value="1131"/>
</dbReference>
<dbReference type="STRING" id="367110.Q7SBD4"/>
<dbReference type="PaxDb" id="5141-EFNCRP00000007471"/>
<dbReference type="EnsemblFungi" id="EAA33716">
    <property type="protein sequence ID" value="EAA33716"/>
    <property type="gene ID" value="NCU07831"/>
</dbReference>
<dbReference type="GeneID" id="3879100"/>
<dbReference type="KEGG" id="ncr:NCU07831"/>
<dbReference type="VEuPathDB" id="FungiDB:NCU07831"/>
<dbReference type="HOGENOM" id="CLU_004304_0_2_1"/>
<dbReference type="InParanoid" id="Q7SBD4"/>
<dbReference type="OMA" id="FRCGLIK"/>
<dbReference type="OrthoDB" id="29647at2759"/>
<dbReference type="Proteomes" id="UP000001805">
    <property type="component" value="Chromosome 3, Linkage Group III"/>
</dbReference>
<dbReference type="GO" id="GO:0016282">
    <property type="term" value="C:eukaryotic 43S preinitiation complex"/>
    <property type="evidence" value="ECO:0007669"/>
    <property type="project" value="UniProtKB-UniRule"/>
</dbReference>
<dbReference type="GO" id="GO:0033290">
    <property type="term" value="C:eukaryotic 48S preinitiation complex"/>
    <property type="evidence" value="ECO:0007669"/>
    <property type="project" value="UniProtKB-UniRule"/>
</dbReference>
<dbReference type="GO" id="GO:0005852">
    <property type="term" value="C:eukaryotic translation initiation factor 3 complex"/>
    <property type="evidence" value="ECO:0000318"/>
    <property type="project" value="GO_Central"/>
</dbReference>
<dbReference type="GO" id="GO:0071540">
    <property type="term" value="C:eukaryotic translation initiation factor 3 complex, eIF3e"/>
    <property type="evidence" value="ECO:0007669"/>
    <property type="project" value="EnsemblFungi"/>
</dbReference>
<dbReference type="GO" id="GO:0071541">
    <property type="term" value="C:eukaryotic translation initiation factor 3 complex, eIF3m"/>
    <property type="evidence" value="ECO:0007669"/>
    <property type="project" value="EnsemblFungi"/>
</dbReference>
<dbReference type="GO" id="GO:0003723">
    <property type="term" value="F:RNA binding"/>
    <property type="evidence" value="ECO:0007669"/>
    <property type="project" value="InterPro"/>
</dbReference>
<dbReference type="GO" id="GO:0003743">
    <property type="term" value="F:translation initiation factor activity"/>
    <property type="evidence" value="ECO:0007669"/>
    <property type="project" value="UniProtKB-UniRule"/>
</dbReference>
<dbReference type="GO" id="GO:0031369">
    <property type="term" value="F:translation initiation factor binding"/>
    <property type="evidence" value="ECO:0000318"/>
    <property type="project" value="GO_Central"/>
</dbReference>
<dbReference type="GO" id="GO:0001732">
    <property type="term" value="P:formation of cytoplasmic translation initiation complex"/>
    <property type="evidence" value="ECO:0007669"/>
    <property type="project" value="UniProtKB-UniRule"/>
</dbReference>
<dbReference type="GO" id="GO:0006413">
    <property type="term" value="P:translational initiation"/>
    <property type="evidence" value="ECO:0000318"/>
    <property type="project" value="GO_Central"/>
</dbReference>
<dbReference type="FunFam" id="1.10.10.10:FF:000300">
    <property type="entry name" value="Eukaryotic translation initiation factor 3 subunit C"/>
    <property type="match status" value="1"/>
</dbReference>
<dbReference type="Gene3D" id="1.10.10.10">
    <property type="entry name" value="Winged helix-like DNA-binding domain superfamily/Winged helix DNA-binding domain"/>
    <property type="match status" value="1"/>
</dbReference>
<dbReference type="HAMAP" id="MF_03002">
    <property type="entry name" value="eIF3c"/>
    <property type="match status" value="1"/>
</dbReference>
<dbReference type="InterPro" id="IPR027516">
    <property type="entry name" value="EIF3C"/>
</dbReference>
<dbReference type="InterPro" id="IPR008905">
    <property type="entry name" value="EIF3C_N_dom"/>
</dbReference>
<dbReference type="InterPro" id="IPR000717">
    <property type="entry name" value="PCI_dom"/>
</dbReference>
<dbReference type="InterPro" id="IPR036388">
    <property type="entry name" value="WH-like_DNA-bd_sf"/>
</dbReference>
<dbReference type="InterPro" id="IPR036390">
    <property type="entry name" value="WH_DNA-bd_sf"/>
</dbReference>
<dbReference type="PANTHER" id="PTHR13937">
    <property type="entry name" value="EUKARYOTIC TRANSLATION INITATION FACTOR 3, SUBUNIT 8 EIF3S8 -RELATED"/>
    <property type="match status" value="1"/>
</dbReference>
<dbReference type="PANTHER" id="PTHR13937:SF0">
    <property type="entry name" value="EUKARYOTIC TRANSLATION INITIATION FACTOR 3 SUBUNIT C-RELATED"/>
    <property type="match status" value="1"/>
</dbReference>
<dbReference type="Pfam" id="PF05470">
    <property type="entry name" value="eIF-3c_N"/>
    <property type="match status" value="1"/>
</dbReference>
<dbReference type="Pfam" id="PF01399">
    <property type="entry name" value="PCI"/>
    <property type="match status" value="1"/>
</dbReference>
<dbReference type="SMART" id="SM00088">
    <property type="entry name" value="PINT"/>
    <property type="match status" value="1"/>
</dbReference>
<dbReference type="SUPFAM" id="SSF46785">
    <property type="entry name" value="Winged helix' DNA-binding domain"/>
    <property type="match status" value="1"/>
</dbReference>
<dbReference type="PROSITE" id="PS50250">
    <property type="entry name" value="PCI"/>
    <property type="match status" value="1"/>
</dbReference>